<comment type="similarity">
    <text evidence="1">Belongs to the UPF0270 family.</text>
</comment>
<dbReference type="EMBL" id="CP000647">
    <property type="protein sequence ID" value="ABR79127.1"/>
    <property type="molecule type" value="Genomic_DNA"/>
</dbReference>
<dbReference type="RefSeq" id="WP_004174055.1">
    <property type="nucleotide sequence ID" value="NC_009648.1"/>
</dbReference>
<dbReference type="SMR" id="A6TEZ3"/>
<dbReference type="STRING" id="272620.KPN_03740"/>
<dbReference type="PaxDb" id="272620-KPN_03740"/>
<dbReference type="EnsemblBacteria" id="ABR79127">
    <property type="protein sequence ID" value="ABR79127"/>
    <property type="gene ID" value="KPN_03740"/>
</dbReference>
<dbReference type="KEGG" id="kpn:KPN_03740"/>
<dbReference type="HOGENOM" id="CLU_186759_1_0_6"/>
<dbReference type="Proteomes" id="UP000000265">
    <property type="component" value="Chromosome"/>
</dbReference>
<dbReference type="Gene3D" id="1.10.10.610">
    <property type="entry name" value="YehU-like"/>
    <property type="match status" value="1"/>
</dbReference>
<dbReference type="HAMAP" id="MF_00690">
    <property type="entry name" value="UPF0270"/>
    <property type="match status" value="1"/>
</dbReference>
<dbReference type="InterPro" id="IPR010648">
    <property type="entry name" value="UPF0270"/>
</dbReference>
<dbReference type="InterPro" id="IPR036685">
    <property type="entry name" value="YehU-like_sf"/>
</dbReference>
<dbReference type="NCBIfam" id="NF003438">
    <property type="entry name" value="PRK04966.1"/>
    <property type="match status" value="1"/>
</dbReference>
<dbReference type="Pfam" id="PF06794">
    <property type="entry name" value="UPF0270"/>
    <property type="match status" value="1"/>
</dbReference>
<dbReference type="PIRSF" id="PIRSF006169">
    <property type="entry name" value="UCP006169"/>
    <property type="match status" value="1"/>
</dbReference>
<dbReference type="SUPFAM" id="SSF118001">
    <property type="entry name" value="YehU-like"/>
    <property type="match status" value="1"/>
</dbReference>
<gene>
    <name type="ordered locus">KPN78578_37030</name>
    <name type="ORF">KPN_03740</name>
</gene>
<organism>
    <name type="scientific">Klebsiella pneumoniae subsp. pneumoniae (strain ATCC 700721 / MGH 78578)</name>
    <dbReference type="NCBI Taxonomy" id="272620"/>
    <lineage>
        <taxon>Bacteria</taxon>
        <taxon>Pseudomonadati</taxon>
        <taxon>Pseudomonadota</taxon>
        <taxon>Gammaproteobacteria</taxon>
        <taxon>Enterobacterales</taxon>
        <taxon>Enterobacteriaceae</taxon>
        <taxon>Klebsiella/Raoultella group</taxon>
        <taxon>Klebsiella</taxon>
        <taxon>Klebsiella pneumoniae complex</taxon>
    </lineage>
</organism>
<feature type="chain" id="PRO_1000062014" description="UPF0270 protein KPN78578_37030">
    <location>
        <begin position="1"/>
        <end position="72"/>
    </location>
</feature>
<reference key="1">
    <citation type="submission" date="2006-09" db="EMBL/GenBank/DDBJ databases">
        <authorList>
            <consortium name="The Klebsiella pneumonia Genome Sequencing Project"/>
            <person name="McClelland M."/>
            <person name="Sanderson E.K."/>
            <person name="Spieth J."/>
            <person name="Clifton W.S."/>
            <person name="Latreille P."/>
            <person name="Sabo A."/>
            <person name="Pepin K."/>
            <person name="Bhonagiri V."/>
            <person name="Porwollik S."/>
            <person name="Ali J."/>
            <person name="Wilson R.K."/>
        </authorList>
    </citation>
    <scope>NUCLEOTIDE SEQUENCE [LARGE SCALE GENOMIC DNA]</scope>
    <source>
        <strain>ATCC 700721 / MGH 78578</strain>
    </source>
</reference>
<accession>A6TEZ3</accession>
<proteinExistence type="inferred from homology"/>
<name>Y3703_KLEP7</name>
<evidence type="ECO:0000255" key="1">
    <source>
        <dbReference type="HAMAP-Rule" id="MF_00690"/>
    </source>
</evidence>
<protein>
    <recommendedName>
        <fullName evidence="1">UPF0270 protein KPN78578_37030</fullName>
    </recommendedName>
</protein>
<sequence length="72" mass="8304">MIIPWQDLDPETLDNLIESFVLREGTDYGEYERSLADKVADVKQQLKRGEAVLVWSELHETVNIMPRALFNG</sequence>